<organism>
    <name type="scientific">Flavobacterium johnsoniae (strain ATCC 17061 / DSM 2064 / JCM 8514 / BCRC 14874 / CCUG 350202 / NBRC 14942 / NCIMB 11054 / UW101)</name>
    <name type="common">Cytophaga johnsonae</name>
    <dbReference type="NCBI Taxonomy" id="376686"/>
    <lineage>
        <taxon>Bacteria</taxon>
        <taxon>Pseudomonadati</taxon>
        <taxon>Bacteroidota</taxon>
        <taxon>Flavobacteriia</taxon>
        <taxon>Flavobacteriales</taxon>
        <taxon>Flavobacteriaceae</taxon>
        <taxon>Flavobacterium</taxon>
    </lineage>
</organism>
<dbReference type="EMBL" id="CP000685">
    <property type="protein sequence ID" value="ABQ05007.1"/>
    <property type="molecule type" value="Genomic_DNA"/>
</dbReference>
<dbReference type="RefSeq" id="WP_012024047.1">
    <property type="nucleotide sequence ID" value="NC_009441.1"/>
</dbReference>
<dbReference type="SMR" id="A5FIF9"/>
<dbReference type="STRING" id="376686.Fjoh_1975"/>
<dbReference type="KEGG" id="fjo:Fjoh_1975"/>
<dbReference type="eggNOG" id="COG2060">
    <property type="taxonomic scope" value="Bacteria"/>
</dbReference>
<dbReference type="HOGENOM" id="CLU_018614_3_0_10"/>
<dbReference type="OrthoDB" id="9763796at2"/>
<dbReference type="Proteomes" id="UP000006694">
    <property type="component" value="Chromosome"/>
</dbReference>
<dbReference type="GO" id="GO:0005886">
    <property type="term" value="C:plasma membrane"/>
    <property type="evidence" value="ECO:0007669"/>
    <property type="project" value="UniProtKB-SubCell"/>
</dbReference>
<dbReference type="GO" id="GO:0008556">
    <property type="term" value="F:P-type potassium transmembrane transporter activity"/>
    <property type="evidence" value="ECO:0007669"/>
    <property type="project" value="InterPro"/>
</dbReference>
<dbReference type="GO" id="GO:0030955">
    <property type="term" value="F:potassium ion binding"/>
    <property type="evidence" value="ECO:0007669"/>
    <property type="project" value="UniProtKB-UniRule"/>
</dbReference>
<dbReference type="HAMAP" id="MF_00275">
    <property type="entry name" value="KdpA"/>
    <property type="match status" value="1"/>
</dbReference>
<dbReference type="InterPro" id="IPR004623">
    <property type="entry name" value="KdpA"/>
</dbReference>
<dbReference type="NCBIfam" id="TIGR00680">
    <property type="entry name" value="kdpA"/>
    <property type="match status" value="1"/>
</dbReference>
<dbReference type="PANTHER" id="PTHR30607">
    <property type="entry name" value="POTASSIUM-TRANSPORTING ATPASE A CHAIN"/>
    <property type="match status" value="1"/>
</dbReference>
<dbReference type="PANTHER" id="PTHR30607:SF2">
    <property type="entry name" value="POTASSIUM-TRANSPORTING ATPASE POTASSIUM-BINDING SUBUNIT"/>
    <property type="match status" value="1"/>
</dbReference>
<dbReference type="Pfam" id="PF03814">
    <property type="entry name" value="KdpA"/>
    <property type="match status" value="1"/>
</dbReference>
<dbReference type="PIRSF" id="PIRSF001294">
    <property type="entry name" value="K_ATPaseA"/>
    <property type="match status" value="1"/>
</dbReference>
<protein>
    <recommendedName>
        <fullName evidence="1">Potassium-transporting ATPase potassium-binding subunit</fullName>
    </recommendedName>
    <alternativeName>
        <fullName evidence="1">ATP phosphohydrolase [potassium-transporting] A chain</fullName>
    </alternativeName>
    <alternativeName>
        <fullName evidence="1">Potassium-binding and translocating subunit A</fullName>
    </alternativeName>
    <alternativeName>
        <fullName evidence="1">Potassium-translocating ATPase A chain</fullName>
    </alternativeName>
</protein>
<name>KDPA_FLAJ1</name>
<evidence type="ECO:0000255" key="1">
    <source>
        <dbReference type="HAMAP-Rule" id="MF_00275"/>
    </source>
</evidence>
<reference key="1">
    <citation type="journal article" date="2009" name="Appl. Environ. Microbiol.">
        <title>Novel features of the polysaccharide-digesting gliding bacterium Flavobacterium johnsoniae as revealed by genome sequence analysis.</title>
        <authorList>
            <person name="McBride M.J."/>
            <person name="Xie G."/>
            <person name="Martens E.C."/>
            <person name="Lapidus A."/>
            <person name="Henrissat B."/>
            <person name="Rhodes R.G."/>
            <person name="Goltsman E."/>
            <person name="Wang W."/>
            <person name="Xu J."/>
            <person name="Hunnicutt D.W."/>
            <person name="Staroscik A.M."/>
            <person name="Hoover T.R."/>
            <person name="Cheng Y.Q."/>
            <person name="Stein J.L."/>
        </authorList>
    </citation>
    <scope>NUCLEOTIDE SEQUENCE [LARGE SCALE GENOMIC DNA]</scope>
    <source>
        <strain>ATCC 17061 / DSM 2064 / JCM 8514 / BCRC 14874 / CCUG 350202 / NBRC 14942 / NCIMB 11054 / UW101</strain>
    </source>
</reference>
<keyword id="KW-0997">Cell inner membrane</keyword>
<keyword id="KW-1003">Cell membrane</keyword>
<keyword id="KW-0406">Ion transport</keyword>
<keyword id="KW-0472">Membrane</keyword>
<keyword id="KW-0630">Potassium</keyword>
<keyword id="KW-0633">Potassium transport</keyword>
<keyword id="KW-0812">Transmembrane</keyword>
<keyword id="KW-1133">Transmembrane helix</keyword>
<keyword id="KW-0813">Transport</keyword>
<gene>
    <name evidence="1" type="primary">kdpA</name>
    <name type="ordered locus">Fjoh_1975</name>
</gene>
<comment type="function">
    <text evidence="1">Part of the high-affinity ATP-driven potassium transport (or Kdp) system, which catalyzes the hydrolysis of ATP coupled with the electrogenic transport of potassium into the cytoplasm. This subunit binds the periplasmic potassium ions and delivers the ions to the membrane domain of KdpB through an intramembrane tunnel.</text>
</comment>
<comment type="subunit">
    <text evidence="1">The system is composed of three essential subunits: KdpA, KdpB and KdpC.</text>
</comment>
<comment type="subcellular location">
    <subcellularLocation>
        <location evidence="1">Cell inner membrane</location>
        <topology evidence="1">Multi-pass membrane protein</topology>
    </subcellularLocation>
</comment>
<comment type="similarity">
    <text evidence="1">Belongs to the KdpA family.</text>
</comment>
<feature type="chain" id="PRO_1000114682" description="Potassium-transporting ATPase potassium-binding subunit">
    <location>
        <begin position="1"/>
        <end position="573"/>
    </location>
</feature>
<feature type="transmembrane region" description="Helical" evidence="1">
    <location>
        <begin position="3"/>
        <end position="23"/>
    </location>
</feature>
<feature type="transmembrane region" description="Helical" evidence="1">
    <location>
        <begin position="68"/>
        <end position="88"/>
    </location>
</feature>
<feature type="transmembrane region" description="Helical" evidence="1">
    <location>
        <begin position="133"/>
        <end position="153"/>
    </location>
</feature>
<feature type="transmembrane region" description="Helical" evidence="1">
    <location>
        <begin position="179"/>
        <end position="199"/>
    </location>
</feature>
<feature type="transmembrane region" description="Helical" evidence="1">
    <location>
        <begin position="256"/>
        <end position="276"/>
    </location>
</feature>
<feature type="transmembrane region" description="Helical" evidence="1">
    <location>
        <begin position="281"/>
        <end position="301"/>
    </location>
</feature>
<feature type="transmembrane region" description="Helical" evidence="1">
    <location>
        <begin position="380"/>
        <end position="400"/>
    </location>
</feature>
<feature type="transmembrane region" description="Helical" evidence="1">
    <location>
        <begin position="418"/>
        <end position="438"/>
    </location>
</feature>
<feature type="transmembrane region" description="Helical" evidence="1">
    <location>
        <begin position="501"/>
        <end position="521"/>
    </location>
</feature>
<feature type="transmembrane region" description="Helical" evidence="1">
    <location>
        <begin position="540"/>
        <end position="560"/>
    </location>
</feature>
<accession>A5FIF9</accession>
<proteinExistence type="inferred from homology"/>
<sequence>MNTELLGVIGIFILTIVLAIPLGKYIAKVYLGDKTLLDPIFNPIEKFIFKISGINSAEEMNWKQHLKALLSINIVWFFLCFFVLLFQGSLPLNPDNNPSMTADLAFNTAISFLVNCNLQHYSGESGVSYLSQIVLMFLQFVSAGIGMAAAAMIFTAMKERTTEKLGNFYNYFIKSCTRILLPLSAIAAVALVFSGTPMTFEGKDAITTLQGDHVEVSRGPAAAFIAIKHIGTNGGGFFGANSAHPLENPTYFTNGVELWAQMIIPFAMIFALGFYLNKRKLANIIFGVMTVGFLLLVVPTVMSEINGNPAITKMGIAQTTGAMEGKEVRFGPAISGFWSIATTVISTGSVNSMHDSSMPVSGAMQLLSMMVNAFYGGCGVGILNYYIFIILAVFISGLMVGRTPEFLGKKIEAREVKIAAFIAILHPLLILAGTALASYFTAHDTAMGYWFNGNATGWLNNPGNHGFSEMLYEYTSSAANNGSGFEGLGDNNPFWNITTGIVLLLSRFIPIIGPLAIAGLLAGKKYIPESAGTLKTDTSIFGIMTFAVIAIIAALSFFPALALGPLAEYFTLK</sequence>